<sequence>MVMRSWPAPTVVALPDHGGPLSVHDTVTGSRRTITPGATARMYVCGITPYDAAHLGHAFTYLTFDLVNRVWRDAGHTVDYVQNITDIDDPLLERAAATGQDWQELAAREIQVFREDMAALRILPPRAFLGVVESMDLIADFVARLRAQGVTYEVDGDIYFSAADAPGFGSLSQLDRTAMLELFAERGGDPGRAGKKDPLDWLLWRAERPGEPAWDTPLGRGRPGWHVECSAISVHELGMGFDLNGGGDDLIFPHHEMGAAEACCATGSRPQARHYLHVAMVGLDGEKMSKSRGNLVFVSQLRKAGTDPMAIRLALLAHHYRTAWEWTDADLRTAEQRLERWRAAAAVENAPDARPLLARVRSALADDLDTATALAAVDEWADAALSGSGDDPDAPALMRTTVDTLLGVALDR</sequence>
<reference key="1">
    <citation type="journal article" date="2007" name="J. Bacteriol.">
        <title>Genome sequence and analysis of the soil cellulolytic actinomycete Thermobifida fusca YX.</title>
        <authorList>
            <person name="Lykidis A."/>
            <person name="Mavromatis K."/>
            <person name="Ivanova N."/>
            <person name="Anderson I."/>
            <person name="Land M."/>
            <person name="DiBartolo G."/>
            <person name="Martinez M."/>
            <person name="Lapidus A."/>
            <person name="Lucas S."/>
            <person name="Copeland A."/>
            <person name="Richardson P."/>
            <person name="Wilson D.B."/>
            <person name="Kyrpides N."/>
        </authorList>
    </citation>
    <scope>NUCLEOTIDE SEQUENCE [LARGE SCALE GENOMIC DNA]</scope>
    <source>
        <strain>YX</strain>
    </source>
</reference>
<feature type="chain" id="PRO_0000400490" description="L-cysteine:1D-myo-inositol 2-amino-2-deoxy-alpha-D-glucopyranoside ligase">
    <location>
        <begin position="1"/>
        <end position="412"/>
    </location>
</feature>
<feature type="short sequence motif" description="'HIGH' region" evidence="1">
    <location>
        <begin position="47"/>
        <end position="57"/>
    </location>
</feature>
<feature type="short sequence motif" description="'ERGGDP' region" evidence="1">
    <location>
        <begin position="185"/>
        <end position="190"/>
    </location>
</feature>
<feature type="short sequence motif" description="'KMSKS' region" evidence="1">
    <location>
        <begin position="287"/>
        <end position="291"/>
    </location>
</feature>
<feature type="binding site" evidence="1">
    <location>
        <begin position="45"/>
        <end position="48"/>
    </location>
    <ligand>
        <name>L-cysteinyl-5'-AMP</name>
        <dbReference type="ChEBI" id="CHEBI:144924"/>
    </ligand>
</feature>
<feature type="binding site" evidence="1">
    <location>
        <position position="45"/>
    </location>
    <ligand>
        <name>Zn(2+)</name>
        <dbReference type="ChEBI" id="CHEBI:29105"/>
    </ligand>
</feature>
<feature type="binding site" evidence="1">
    <location>
        <position position="60"/>
    </location>
    <ligand>
        <name>L-cysteinyl-5'-AMP</name>
        <dbReference type="ChEBI" id="CHEBI:144924"/>
    </ligand>
</feature>
<feature type="binding site" evidence="1">
    <location>
        <begin position="83"/>
        <end position="85"/>
    </location>
    <ligand>
        <name>L-cysteinyl-5'-AMP</name>
        <dbReference type="ChEBI" id="CHEBI:144924"/>
    </ligand>
</feature>
<feature type="binding site" evidence="1">
    <location>
        <position position="225"/>
    </location>
    <ligand>
        <name>L-cysteinyl-5'-AMP</name>
        <dbReference type="ChEBI" id="CHEBI:144924"/>
    </ligand>
</feature>
<feature type="binding site" evidence="1">
    <location>
        <position position="229"/>
    </location>
    <ligand>
        <name>Zn(2+)</name>
        <dbReference type="ChEBI" id="CHEBI:29105"/>
    </ligand>
</feature>
<feature type="binding site" evidence="1">
    <location>
        <begin position="247"/>
        <end position="249"/>
    </location>
    <ligand>
        <name>L-cysteinyl-5'-AMP</name>
        <dbReference type="ChEBI" id="CHEBI:144924"/>
    </ligand>
</feature>
<feature type="binding site" evidence="1">
    <location>
        <position position="254"/>
    </location>
    <ligand>
        <name>Zn(2+)</name>
        <dbReference type="ChEBI" id="CHEBI:29105"/>
    </ligand>
</feature>
<feature type="binding site" evidence="1">
    <location>
        <position position="281"/>
    </location>
    <ligand>
        <name>L-cysteinyl-5'-AMP</name>
        <dbReference type="ChEBI" id="CHEBI:144924"/>
    </ligand>
</feature>
<proteinExistence type="inferred from homology"/>
<evidence type="ECO:0000255" key="1">
    <source>
        <dbReference type="HAMAP-Rule" id="MF_01697"/>
    </source>
</evidence>
<dbReference type="EC" id="6.3.1.13" evidence="1"/>
<dbReference type="EMBL" id="CP000088">
    <property type="protein sequence ID" value="AAZ55865.1"/>
    <property type="molecule type" value="Genomic_DNA"/>
</dbReference>
<dbReference type="SMR" id="Q47NV4"/>
<dbReference type="STRING" id="269800.Tfu_1832"/>
<dbReference type="KEGG" id="tfu:Tfu_1832"/>
<dbReference type="eggNOG" id="COG0215">
    <property type="taxonomic scope" value="Bacteria"/>
</dbReference>
<dbReference type="HOGENOM" id="CLU_013528_0_0_11"/>
<dbReference type="OrthoDB" id="9815130at2"/>
<dbReference type="GO" id="GO:0005829">
    <property type="term" value="C:cytosol"/>
    <property type="evidence" value="ECO:0007669"/>
    <property type="project" value="TreeGrafter"/>
</dbReference>
<dbReference type="GO" id="GO:0005524">
    <property type="term" value="F:ATP binding"/>
    <property type="evidence" value="ECO:0007669"/>
    <property type="project" value="UniProtKB-KW"/>
</dbReference>
<dbReference type="GO" id="GO:0035446">
    <property type="term" value="F:cysteine-glucosaminylinositol ligase activity"/>
    <property type="evidence" value="ECO:0007669"/>
    <property type="project" value="UniProtKB-UniRule"/>
</dbReference>
<dbReference type="GO" id="GO:0004817">
    <property type="term" value="F:cysteine-tRNA ligase activity"/>
    <property type="evidence" value="ECO:0007669"/>
    <property type="project" value="TreeGrafter"/>
</dbReference>
<dbReference type="GO" id="GO:0008270">
    <property type="term" value="F:zinc ion binding"/>
    <property type="evidence" value="ECO:0007669"/>
    <property type="project" value="UniProtKB-UniRule"/>
</dbReference>
<dbReference type="GO" id="GO:0006423">
    <property type="term" value="P:cysteinyl-tRNA aminoacylation"/>
    <property type="evidence" value="ECO:0007669"/>
    <property type="project" value="TreeGrafter"/>
</dbReference>
<dbReference type="GO" id="GO:0010125">
    <property type="term" value="P:mycothiol biosynthetic process"/>
    <property type="evidence" value="ECO:0007669"/>
    <property type="project" value="UniProtKB-UniRule"/>
</dbReference>
<dbReference type="CDD" id="cd07955">
    <property type="entry name" value="Anticodon_Ia_Cys_like"/>
    <property type="match status" value="1"/>
</dbReference>
<dbReference type="CDD" id="cd00672">
    <property type="entry name" value="CysRS_core"/>
    <property type="match status" value="1"/>
</dbReference>
<dbReference type="FunFam" id="3.40.50.620:FF:000134">
    <property type="entry name" value="L-cysteine:1D-myo-inositol 2-amino-2-deoxy-alpha-D-glucopyranoside ligase"/>
    <property type="match status" value="1"/>
</dbReference>
<dbReference type="Gene3D" id="1.20.120.640">
    <property type="entry name" value="Anticodon-binding domain of a subclass of class I aminoacyl-tRNA synthetases"/>
    <property type="match status" value="1"/>
</dbReference>
<dbReference type="Gene3D" id="3.40.50.620">
    <property type="entry name" value="HUPs"/>
    <property type="match status" value="1"/>
</dbReference>
<dbReference type="HAMAP" id="MF_01697">
    <property type="entry name" value="MshC"/>
    <property type="match status" value="1"/>
</dbReference>
<dbReference type="InterPro" id="IPR024909">
    <property type="entry name" value="Cys-tRNA/MSH_ligase"/>
</dbReference>
<dbReference type="InterPro" id="IPR017812">
    <property type="entry name" value="Mycothiol_ligase_MshC"/>
</dbReference>
<dbReference type="InterPro" id="IPR014729">
    <property type="entry name" value="Rossmann-like_a/b/a_fold"/>
</dbReference>
<dbReference type="InterPro" id="IPR032678">
    <property type="entry name" value="tRNA-synt_1_cat_dom"/>
</dbReference>
<dbReference type="NCBIfam" id="TIGR03447">
    <property type="entry name" value="mycothiol_MshC"/>
    <property type="match status" value="1"/>
</dbReference>
<dbReference type="PANTHER" id="PTHR10890:SF3">
    <property type="entry name" value="CYSTEINE--TRNA LIGASE, CYTOPLASMIC"/>
    <property type="match status" value="1"/>
</dbReference>
<dbReference type="PANTHER" id="PTHR10890">
    <property type="entry name" value="CYSTEINYL-TRNA SYNTHETASE"/>
    <property type="match status" value="1"/>
</dbReference>
<dbReference type="Pfam" id="PF01406">
    <property type="entry name" value="tRNA-synt_1e"/>
    <property type="match status" value="1"/>
</dbReference>
<dbReference type="PRINTS" id="PR00983">
    <property type="entry name" value="TRNASYNTHCYS"/>
</dbReference>
<dbReference type="SUPFAM" id="SSF52374">
    <property type="entry name" value="Nucleotidylyl transferase"/>
    <property type="match status" value="1"/>
</dbReference>
<keyword id="KW-0067">ATP-binding</keyword>
<keyword id="KW-0436">Ligase</keyword>
<keyword id="KW-0479">Metal-binding</keyword>
<keyword id="KW-0547">Nucleotide-binding</keyword>
<keyword id="KW-0862">Zinc</keyword>
<accession>Q47NV4</accession>
<gene>
    <name evidence="1" type="primary">mshC</name>
    <name type="ordered locus">Tfu_1832</name>
</gene>
<name>MSHC_THEFY</name>
<protein>
    <recommendedName>
        <fullName evidence="1">L-cysteine:1D-myo-inositol 2-amino-2-deoxy-alpha-D-glucopyranoside ligase</fullName>
        <shortName evidence="1">L-Cys:GlcN-Ins ligase</shortName>
        <ecNumber evidence="1">6.3.1.13</ecNumber>
    </recommendedName>
    <alternativeName>
        <fullName evidence="1">Mycothiol ligase</fullName>
        <shortName evidence="1">MSH ligase</shortName>
    </alternativeName>
</protein>
<organism>
    <name type="scientific">Thermobifida fusca (strain YX)</name>
    <dbReference type="NCBI Taxonomy" id="269800"/>
    <lineage>
        <taxon>Bacteria</taxon>
        <taxon>Bacillati</taxon>
        <taxon>Actinomycetota</taxon>
        <taxon>Actinomycetes</taxon>
        <taxon>Streptosporangiales</taxon>
        <taxon>Nocardiopsidaceae</taxon>
        <taxon>Thermobifida</taxon>
    </lineage>
</organism>
<comment type="function">
    <text evidence="1">Catalyzes the ATP-dependent condensation of GlcN-Ins and L-cysteine to form L-Cys-GlcN-Ins.</text>
</comment>
<comment type="catalytic activity">
    <reaction evidence="1">
        <text>1D-myo-inositol 2-amino-2-deoxy-alpha-D-glucopyranoside + L-cysteine + ATP = 1D-myo-inositol 2-(L-cysteinylamino)-2-deoxy-alpha-D-glucopyranoside + AMP + diphosphate + H(+)</text>
        <dbReference type="Rhea" id="RHEA:26176"/>
        <dbReference type="ChEBI" id="CHEBI:15378"/>
        <dbReference type="ChEBI" id="CHEBI:30616"/>
        <dbReference type="ChEBI" id="CHEBI:33019"/>
        <dbReference type="ChEBI" id="CHEBI:35235"/>
        <dbReference type="ChEBI" id="CHEBI:58886"/>
        <dbReference type="ChEBI" id="CHEBI:58887"/>
        <dbReference type="ChEBI" id="CHEBI:456215"/>
        <dbReference type="EC" id="6.3.1.13"/>
    </reaction>
</comment>
<comment type="cofactor">
    <cofactor evidence="1">
        <name>Zn(2+)</name>
        <dbReference type="ChEBI" id="CHEBI:29105"/>
    </cofactor>
    <text evidence="1">Binds 1 zinc ion per subunit.</text>
</comment>
<comment type="subunit">
    <text evidence="1">Monomer.</text>
</comment>
<comment type="similarity">
    <text evidence="1">Belongs to the class-I aminoacyl-tRNA synthetase family. MshC subfamily.</text>
</comment>